<name>YX09_CAEEL</name>
<gene>
    <name type="ORF">C03B1.9</name>
</gene>
<dbReference type="EMBL" id="FO080304">
    <property type="protein sequence ID" value="CCD62746.1"/>
    <property type="molecule type" value="Genomic_DNA"/>
</dbReference>
<dbReference type="PIR" id="T15381">
    <property type="entry name" value="T15381"/>
</dbReference>
<dbReference type="RefSeq" id="NP_509063.2">
    <property type="nucleotide sequence ID" value="NM_076662.2"/>
</dbReference>
<dbReference type="FunCoup" id="Q11115">
    <property type="interactions" value="837"/>
</dbReference>
<dbReference type="PaxDb" id="6239-C03B1.9"/>
<dbReference type="EnsemblMetazoa" id="C03B1.9.1">
    <property type="protein sequence ID" value="C03B1.9.1"/>
    <property type="gene ID" value="WBGene00015379"/>
</dbReference>
<dbReference type="GeneID" id="182150"/>
<dbReference type="KEGG" id="cel:CELE_C03B1.9"/>
<dbReference type="UCSC" id="C03B1.9">
    <property type="organism name" value="c. elegans"/>
</dbReference>
<dbReference type="AGR" id="WB:WBGene00015379"/>
<dbReference type="CTD" id="182150"/>
<dbReference type="WormBase" id="C03B1.9">
    <property type="protein sequence ID" value="CE41349"/>
    <property type="gene ID" value="WBGene00015379"/>
</dbReference>
<dbReference type="eggNOG" id="ENOG502T3CQ">
    <property type="taxonomic scope" value="Eukaryota"/>
</dbReference>
<dbReference type="HOGENOM" id="CLU_1338637_0_0_1"/>
<dbReference type="InParanoid" id="Q11115"/>
<dbReference type="OMA" id="ECEIREL"/>
<dbReference type="OrthoDB" id="5799639at2759"/>
<dbReference type="PRO" id="PR:Q11115"/>
<dbReference type="Proteomes" id="UP000001940">
    <property type="component" value="Chromosome X"/>
</dbReference>
<sequence length="205" mass="23641">MKEVEENFKLHSIPSCAAKEKMGATFSNESALHGTVLGHLLNLPNVNTEVLKAIYKMITVNGNQDKLSDIGISKFLTKWRTVYFSNKKPLIDALNNRFYDDVVNEEFEHFINKQNDNYMEARAEIGLLIELYHKDYLKSNFLNNDALEKLIILIIATDYMPMNFFPIFNYSCSTTDPSFKSHLLNSIQNLFLVGYEPILDKLLFI</sequence>
<accession>Q11115</accession>
<feature type="chain" id="PRO_0000065123" description="Uncharacterized protein C03B1.9">
    <location>
        <begin position="1"/>
        <end position="205"/>
    </location>
</feature>
<proteinExistence type="predicted"/>
<protein>
    <recommendedName>
        <fullName>Uncharacterized protein C03B1.9</fullName>
    </recommendedName>
</protein>
<reference key="1">
    <citation type="journal article" date="1998" name="Science">
        <title>Genome sequence of the nematode C. elegans: a platform for investigating biology.</title>
        <authorList>
            <consortium name="The C. elegans sequencing consortium"/>
        </authorList>
    </citation>
    <scope>NUCLEOTIDE SEQUENCE [LARGE SCALE GENOMIC DNA]</scope>
    <source>
        <strain>Bristol N2</strain>
    </source>
</reference>
<keyword id="KW-1185">Reference proteome</keyword>
<organism>
    <name type="scientific">Caenorhabditis elegans</name>
    <dbReference type="NCBI Taxonomy" id="6239"/>
    <lineage>
        <taxon>Eukaryota</taxon>
        <taxon>Metazoa</taxon>
        <taxon>Ecdysozoa</taxon>
        <taxon>Nematoda</taxon>
        <taxon>Chromadorea</taxon>
        <taxon>Rhabditida</taxon>
        <taxon>Rhabditina</taxon>
        <taxon>Rhabditomorpha</taxon>
        <taxon>Rhabditoidea</taxon>
        <taxon>Rhabditidae</taxon>
        <taxon>Peloderinae</taxon>
        <taxon>Caenorhabditis</taxon>
    </lineage>
</organism>